<evidence type="ECO:0000255" key="1">
    <source>
        <dbReference type="HAMAP-Rule" id="MF_01416"/>
    </source>
</evidence>
<protein>
    <recommendedName>
        <fullName evidence="1">ATP synthase subunit delta</fullName>
    </recommendedName>
    <alternativeName>
        <fullName evidence="1">ATP synthase F(1) sector subunit delta</fullName>
    </alternativeName>
    <alternativeName>
        <fullName evidence="1">F-type ATPase subunit delta</fullName>
        <shortName evidence="1">F-ATPase subunit delta</shortName>
    </alternativeName>
</protein>
<organism>
    <name type="scientific">Chlorobaculum parvum (strain DSM 263 / NCIMB 8327)</name>
    <name type="common">Chlorobium vibrioforme subsp. thiosulfatophilum</name>
    <dbReference type="NCBI Taxonomy" id="517417"/>
    <lineage>
        <taxon>Bacteria</taxon>
        <taxon>Pseudomonadati</taxon>
        <taxon>Chlorobiota</taxon>
        <taxon>Chlorobiia</taxon>
        <taxon>Chlorobiales</taxon>
        <taxon>Chlorobiaceae</taxon>
        <taxon>Chlorobaculum</taxon>
    </lineage>
</organism>
<reference key="1">
    <citation type="submission" date="2008-06" db="EMBL/GenBank/DDBJ databases">
        <title>Complete sequence of Chlorobaculum parvum NCIB 8327.</title>
        <authorList>
            <consortium name="US DOE Joint Genome Institute"/>
            <person name="Lucas S."/>
            <person name="Copeland A."/>
            <person name="Lapidus A."/>
            <person name="Glavina del Rio T."/>
            <person name="Dalin E."/>
            <person name="Tice H."/>
            <person name="Bruce D."/>
            <person name="Goodwin L."/>
            <person name="Pitluck S."/>
            <person name="Schmutz J."/>
            <person name="Larimer F."/>
            <person name="Land M."/>
            <person name="Hauser L."/>
            <person name="Kyrpides N."/>
            <person name="Mikhailova N."/>
            <person name="Zhao F."/>
            <person name="Li T."/>
            <person name="Liu Z."/>
            <person name="Overmann J."/>
            <person name="Bryant D.A."/>
            <person name="Richardson P."/>
        </authorList>
    </citation>
    <scope>NUCLEOTIDE SEQUENCE [LARGE SCALE GENOMIC DNA]</scope>
    <source>
        <strain>DSM 263 / NCIMB 8327</strain>
    </source>
</reference>
<accession>B3QLV0</accession>
<dbReference type="EMBL" id="CP001099">
    <property type="protein sequence ID" value="ACF12436.1"/>
    <property type="molecule type" value="Genomic_DNA"/>
</dbReference>
<dbReference type="RefSeq" id="WP_012503269.1">
    <property type="nucleotide sequence ID" value="NC_011027.1"/>
</dbReference>
<dbReference type="SMR" id="B3QLV0"/>
<dbReference type="STRING" id="517417.Cpar_2049"/>
<dbReference type="KEGG" id="cpc:Cpar_2049"/>
<dbReference type="eggNOG" id="COG0712">
    <property type="taxonomic scope" value="Bacteria"/>
</dbReference>
<dbReference type="HOGENOM" id="CLU_085114_4_0_10"/>
<dbReference type="OrthoDB" id="9802471at2"/>
<dbReference type="Proteomes" id="UP000008811">
    <property type="component" value="Chromosome"/>
</dbReference>
<dbReference type="GO" id="GO:0005886">
    <property type="term" value="C:plasma membrane"/>
    <property type="evidence" value="ECO:0007669"/>
    <property type="project" value="UniProtKB-SubCell"/>
</dbReference>
<dbReference type="GO" id="GO:0045259">
    <property type="term" value="C:proton-transporting ATP synthase complex"/>
    <property type="evidence" value="ECO:0007669"/>
    <property type="project" value="UniProtKB-KW"/>
</dbReference>
<dbReference type="GO" id="GO:0046933">
    <property type="term" value="F:proton-transporting ATP synthase activity, rotational mechanism"/>
    <property type="evidence" value="ECO:0007669"/>
    <property type="project" value="UniProtKB-UniRule"/>
</dbReference>
<dbReference type="Gene3D" id="1.10.520.20">
    <property type="entry name" value="N-terminal domain of the delta subunit of the F1F0-ATP synthase"/>
    <property type="match status" value="1"/>
</dbReference>
<dbReference type="HAMAP" id="MF_01416">
    <property type="entry name" value="ATP_synth_delta_bact"/>
    <property type="match status" value="1"/>
</dbReference>
<dbReference type="InterPro" id="IPR026015">
    <property type="entry name" value="ATP_synth_OSCP/delta_N_sf"/>
</dbReference>
<dbReference type="InterPro" id="IPR000711">
    <property type="entry name" value="ATPase_OSCP/dsu"/>
</dbReference>
<dbReference type="NCBIfam" id="TIGR01145">
    <property type="entry name" value="ATP_synt_delta"/>
    <property type="match status" value="1"/>
</dbReference>
<dbReference type="PANTHER" id="PTHR11910">
    <property type="entry name" value="ATP SYNTHASE DELTA CHAIN"/>
    <property type="match status" value="1"/>
</dbReference>
<dbReference type="Pfam" id="PF00213">
    <property type="entry name" value="OSCP"/>
    <property type="match status" value="1"/>
</dbReference>
<dbReference type="PRINTS" id="PR00125">
    <property type="entry name" value="ATPASEDELTA"/>
</dbReference>
<dbReference type="SUPFAM" id="SSF47928">
    <property type="entry name" value="N-terminal domain of the delta subunit of the F1F0-ATP synthase"/>
    <property type="match status" value="1"/>
</dbReference>
<sequence>MSSAIASRRYALALLEVAIEANFLDTVTEDLLKIQEVLSGSRELLLALRSPLINVDLKSRILEEIFGKEVGEKTMIFIKLLAHKKRANLLPTVITEFSSLLDERNGVINADVKSAVKLSDEQAKELVNGLSIRTGKKIRAKMSLDEKLIGGVTVKIGDTILDGSIQHQLQLLKSSLIAEPA</sequence>
<gene>
    <name evidence="1" type="primary">atpH</name>
    <name type="ordered locus">Cpar_2049</name>
</gene>
<feature type="chain" id="PRO_0000370935" description="ATP synthase subunit delta">
    <location>
        <begin position="1"/>
        <end position="181"/>
    </location>
</feature>
<proteinExistence type="inferred from homology"/>
<comment type="function">
    <text evidence="1">F(1)F(0) ATP synthase produces ATP from ADP in the presence of a proton or sodium gradient. F-type ATPases consist of two structural domains, F(1) containing the extramembraneous catalytic core and F(0) containing the membrane proton channel, linked together by a central stalk and a peripheral stalk. During catalysis, ATP synthesis in the catalytic domain of F(1) is coupled via a rotary mechanism of the central stalk subunits to proton translocation.</text>
</comment>
<comment type="function">
    <text evidence="1">This protein is part of the stalk that links CF(0) to CF(1). It either transmits conformational changes from CF(0) to CF(1) or is implicated in proton conduction.</text>
</comment>
<comment type="subunit">
    <text evidence="1">F-type ATPases have 2 components, F(1) - the catalytic core - and F(0) - the membrane proton channel. F(1) has five subunits: alpha(3), beta(3), gamma(1), delta(1), epsilon(1). F(0) has three main subunits: a(1), b(2) and c(10-14). The alpha and beta chains form an alternating ring which encloses part of the gamma chain. F(1) is attached to F(0) by a central stalk formed by the gamma and epsilon chains, while a peripheral stalk is formed by the delta and b chains.</text>
</comment>
<comment type="subcellular location">
    <subcellularLocation>
        <location evidence="1">Cell inner membrane</location>
        <topology evidence="1">Peripheral membrane protein</topology>
    </subcellularLocation>
</comment>
<comment type="similarity">
    <text evidence="1">Belongs to the ATPase delta chain family.</text>
</comment>
<keyword id="KW-0066">ATP synthesis</keyword>
<keyword id="KW-0997">Cell inner membrane</keyword>
<keyword id="KW-1003">Cell membrane</keyword>
<keyword id="KW-0139">CF(1)</keyword>
<keyword id="KW-0375">Hydrogen ion transport</keyword>
<keyword id="KW-0406">Ion transport</keyword>
<keyword id="KW-0472">Membrane</keyword>
<keyword id="KW-0813">Transport</keyword>
<name>ATPD_CHLP8</name>